<name>NAT10_MOUSE</name>
<evidence type="ECO:0000250" key="1">
    <source>
        <dbReference type="UniProtKB" id="P53914"/>
    </source>
</evidence>
<evidence type="ECO:0000250" key="2">
    <source>
        <dbReference type="UniProtKB" id="Q9H0A0"/>
    </source>
</evidence>
<evidence type="ECO:0000255" key="3">
    <source>
        <dbReference type="HAMAP-Rule" id="MF_03211"/>
    </source>
</evidence>
<evidence type="ECO:0000256" key="4">
    <source>
        <dbReference type="SAM" id="MobiDB-lite"/>
    </source>
</evidence>
<evidence type="ECO:0000269" key="5">
    <source>
    </source>
</evidence>
<evidence type="ECO:0000305" key="6"/>
<comment type="function">
    <text evidence="1 2">RNA cytidine acetyltransferase that catalyzes the formation of N(4)-acetylcytidine (ac4C) modification on mRNAs, 18S rRNA and tRNAs. Catalyzes ac4C modification of a broad range of mRNAs, enhancing mRNA stability and translation. mRNA ac4C modification is frequently present within wobble cytidine sites and promotes translation efficiency. Mediates the formation of ac4C at position 1842 in 18S rRNA (By similarity). May also catalyze the formation of ac4C at position 1337 in 18S rRNA (By similarity). Required for early nucleolar cleavages of precursor rRNA at sites A0, A1 and A2 during 18S rRNA synthesis (By similarity). Catalyzes the formation of ac4C in serine and leucine tRNAs (By similarity). Requires the tRNA-binding adapter protein THUMPD1 for full tRNA acetyltransferase activity but not for 18S rRNA acetylation. In addition to RNA acetyltransferase activity, also able to acetylate lysine residues of proteins, such as histones, microtubules, p53/TP53 and MDM2, in vitro. The relevance of the protein lysine acetyltransferase activity is however unsure in vivo. Activates telomerase activity by stimulating the transcription of TERT, and may also regulate telomerase function by affecting the balance of telomerase subunit assembly, disassembly, and localization. Involved in the regulation of centrosome duplication by acetylating CENATAC during mitosis, promoting SASS6 proteasome degradation (By similarity). Part of the small subunit (SSU) processome, first precursor of the small eukaryotic ribosomal subunit. During the assembly of the SSU processome in the nucleolus, many ribosome biogenesis factors, an RNA chaperone and ribosomal proteins associate with the nascent pre-rRNA and work in concert to generate RNA folding, modifications, rearrangements and cleavage as well as targeted degradation of pre-ribosomal RNA by the RNA exosome (By similarity).</text>
</comment>
<comment type="catalytic activity">
    <reaction evidence="3">
        <text>a cytidine in 18S rRNA + acetyl-CoA + ATP + H2O = an N(4)-acetylcytidine in 18S rRNA + ADP + phosphate + CoA + H(+)</text>
        <dbReference type="Rhea" id="RHEA:51424"/>
        <dbReference type="Rhea" id="RHEA-COMP:13575"/>
        <dbReference type="Rhea" id="RHEA-COMP:13576"/>
        <dbReference type="ChEBI" id="CHEBI:15377"/>
        <dbReference type="ChEBI" id="CHEBI:15378"/>
        <dbReference type="ChEBI" id="CHEBI:30616"/>
        <dbReference type="ChEBI" id="CHEBI:43474"/>
        <dbReference type="ChEBI" id="CHEBI:57287"/>
        <dbReference type="ChEBI" id="CHEBI:57288"/>
        <dbReference type="ChEBI" id="CHEBI:74900"/>
        <dbReference type="ChEBI" id="CHEBI:82748"/>
        <dbReference type="ChEBI" id="CHEBI:456216"/>
    </reaction>
</comment>
<comment type="catalytic activity">
    <reaction evidence="3">
        <text>a cytidine in tRNA + acetyl-CoA + ATP + H2O = an N(4)-acetylcytidine in tRNA + ADP + phosphate + CoA + H(+)</text>
        <dbReference type="Rhea" id="RHEA:53876"/>
        <dbReference type="Rhea" id="RHEA-COMP:13670"/>
        <dbReference type="Rhea" id="RHEA-COMP:13671"/>
        <dbReference type="ChEBI" id="CHEBI:15377"/>
        <dbReference type="ChEBI" id="CHEBI:15378"/>
        <dbReference type="ChEBI" id="CHEBI:30616"/>
        <dbReference type="ChEBI" id="CHEBI:43474"/>
        <dbReference type="ChEBI" id="CHEBI:57287"/>
        <dbReference type="ChEBI" id="CHEBI:57288"/>
        <dbReference type="ChEBI" id="CHEBI:74900"/>
        <dbReference type="ChEBI" id="CHEBI:82748"/>
        <dbReference type="ChEBI" id="CHEBI:456216"/>
    </reaction>
</comment>
<comment type="catalytic activity">
    <reaction evidence="2">
        <text>a cytidine in mRNA + acetyl-CoA + ATP + H2O = an N(4)-acetylcytidine in mRNA + ADP + phosphate + CoA + H(+)</text>
        <dbReference type="Rhea" id="RHEA:58480"/>
        <dbReference type="Rhea" id="RHEA-COMP:15145"/>
        <dbReference type="Rhea" id="RHEA-COMP:15146"/>
        <dbReference type="ChEBI" id="CHEBI:15377"/>
        <dbReference type="ChEBI" id="CHEBI:15378"/>
        <dbReference type="ChEBI" id="CHEBI:30616"/>
        <dbReference type="ChEBI" id="CHEBI:43474"/>
        <dbReference type="ChEBI" id="CHEBI:57287"/>
        <dbReference type="ChEBI" id="CHEBI:57288"/>
        <dbReference type="ChEBI" id="CHEBI:74900"/>
        <dbReference type="ChEBI" id="CHEBI:82748"/>
        <dbReference type="ChEBI" id="CHEBI:456216"/>
    </reaction>
</comment>
<comment type="subunit">
    <text evidence="2">Part of the small subunit (SSU) processome, composed of more than 70 proteins and the RNA chaperone small nucleolar RNA (snoRNA) U3. Interacts with THUMPD1. Interacts with SUN1 (via N-terminus). Interacts with TERT.</text>
</comment>
<comment type="subcellular location">
    <subcellularLocation>
        <location evidence="3">Nucleus</location>
        <location evidence="3">Nucleolus</location>
    </subcellularLocation>
</comment>
<comment type="disruption phenotype">
    <text evidence="5">Embryonic lethality before 14.5 dpc (PubMed:29703891). Heterozygous mice are healthy and show enhanced healthspan in a Hutchinson-Gilford progeria syndrome (HGPS) mouse model; molecular mechanisms explaining the relation between Nat10 activity and nuclear architecture defects in HGPS mouse models are however unclear (PubMed:29703891).</text>
</comment>
<comment type="similarity">
    <text evidence="3">Belongs to the RNA cytidine acetyltransferase family. NAT10 subfamily.</text>
</comment>
<gene>
    <name evidence="3" type="primary">Nat10</name>
    <name type="synonym">Kiaa1709</name>
</gene>
<sequence>MNRKKVDNRIRILIENGVAERQRSLFVVVGDRGKDQVVILHHMLSKATVKARPSVLWCYKKELGFSSHRKKRMRQLQKKIKSGTLNLKQDDPFELFVAATNIRYCYYNETHKILGNTFGMCVLQDFEALTPNLLARTVETVEGGGLVVILLRTMNSLKQLYTMTMDVHSRYRTEAHQDVVGRFNERFILSLASCKKCLVIDDQLDILPISSHVASIEALPPQAPDENLSPAALELLELKESLQDTQPVGVLVDCCKTLDQAKAVLKFIEGISEKTLRSTVALTAARGRGKSAALGLAIAGAVAFGYSNIFVTSPSPDNLHTLFEFVFKGFDALQYQEHLDYEIVQSLNPEFNKAVIRVNVFREHRQTIQYIHPADAVKLGQAELVVIDEAAAIPLPLVKSLLGPYLVFMASTINGYEGTGRSLSLKLIQQLRQQSAQSQVSTTAENKTTTTARLASARTLHEVSLQESIRYAPGDAVEKWLNDLLCLDCLNITRIVSGCPLPEACELYYVNRDTLFCYHKASEVFLQRLMALYVASHYKNSPNDLQMLSDAPAHHLFCLLPPVPPTQNALPEVLAVVQVCLEGEISRQSILNSLSRGKKASGDLIPWTVSEQFQDPDFGGLSGGRVVRIAVHPDYQGMGYGSRALQLLQMYYEGKFPCLEEKVLETPQEIRTVSSEAVSLLEEVITPRKDLPPLLLKLNERPAERLDYLGVSYGLTPRLLKFWKRAGFVPVYLRQTPNDLTGEHSCIMLKTLADEDEAEQGAWLAAFWKDFRRRFLALLSYQFSTFSPALSLNIIQNRNVAKSALPALGREHLEALFLPYDLKRLEMYSRNMVDYHLIMDLIPAISRLYFLNQLGDLSLSAAQSALLLGIGLQHKSVDQLEKEIELPSGQLMGLFNRIIRKVVKLFNDVQEKAIEEQMVAVKDVVMEPTMKTLSDDLDEAAKEFQEKHKKEVGKLKDMDLSQYVIRGDDEEWNEVLSKAGQNASIVSLKSDKKRKLETKQEPKQSKKLKKRDNNRKDMKLKRKK</sequence>
<protein>
    <recommendedName>
        <fullName evidence="3">RNA cytidine acetyltransferase</fullName>
        <ecNumber evidence="3">2.3.1.-</ecNumber>
    </recommendedName>
    <alternativeName>
        <fullName evidence="3">18S rRNA cytosine acetyltransferase</fullName>
    </alternativeName>
    <alternativeName>
        <fullName evidence="3">N-acetyltransferase 10</fullName>
    </alternativeName>
</protein>
<dbReference type="EC" id="2.3.1.-" evidence="3"/>
<dbReference type="EMBL" id="BX537331">
    <property type="status" value="NOT_ANNOTATED_CDS"/>
    <property type="molecule type" value="Genomic_DNA"/>
</dbReference>
<dbReference type="EMBL" id="BC034516">
    <property type="protein sequence ID" value="AAH34516.1"/>
    <property type="molecule type" value="mRNA"/>
</dbReference>
<dbReference type="EMBL" id="BC047436">
    <property type="protein sequence ID" value="AAH47436.1"/>
    <property type="molecule type" value="mRNA"/>
</dbReference>
<dbReference type="EMBL" id="AK054029">
    <property type="protein sequence ID" value="BAC35626.1"/>
    <property type="molecule type" value="mRNA"/>
</dbReference>
<dbReference type="EMBL" id="AK149825">
    <property type="protein sequence ID" value="BAE29107.1"/>
    <property type="molecule type" value="mRNA"/>
</dbReference>
<dbReference type="EMBL" id="AK129427">
    <property type="protein sequence ID" value="BAC98237.1"/>
    <property type="molecule type" value="Transcribed_RNA"/>
</dbReference>
<dbReference type="CCDS" id="CCDS16480.1"/>
<dbReference type="RefSeq" id="NP_694766.1">
    <property type="nucleotide sequence ID" value="NM_153126.4"/>
</dbReference>
<dbReference type="SMR" id="Q8K224"/>
<dbReference type="BioGRID" id="221159">
    <property type="interactions" value="9"/>
</dbReference>
<dbReference type="FunCoup" id="Q8K224">
    <property type="interactions" value="3282"/>
</dbReference>
<dbReference type="IntAct" id="Q8K224">
    <property type="interactions" value="4"/>
</dbReference>
<dbReference type="MINT" id="Q8K224"/>
<dbReference type="STRING" id="10090.ENSMUSP00000028608"/>
<dbReference type="GlyGen" id="Q8K224">
    <property type="glycosylation" value="1 site, 1 O-linked glycan (1 site)"/>
</dbReference>
<dbReference type="iPTMnet" id="Q8K224"/>
<dbReference type="PhosphoSitePlus" id="Q8K224"/>
<dbReference type="SwissPalm" id="Q8K224"/>
<dbReference type="PaxDb" id="10090-ENSMUSP00000028608"/>
<dbReference type="PeptideAtlas" id="Q8K224"/>
<dbReference type="ProteomicsDB" id="252777"/>
<dbReference type="Pumba" id="Q8K224"/>
<dbReference type="Antibodypedia" id="25804">
    <property type="antibodies" value="228 antibodies from 34 providers"/>
</dbReference>
<dbReference type="DNASU" id="98956"/>
<dbReference type="Ensembl" id="ENSMUST00000028608.13">
    <property type="protein sequence ID" value="ENSMUSP00000028608.7"/>
    <property type="gene ID" value="ENSMUSG00000027185.16"/>
</dbReference>
<dbReference type="GeneID" id="98956"/>
<dbReference type="KEGG" id="mmu:98956"/>
<dbReference type="UCSC" id="uc008liy.1">
    <property type="organism name" value="mouse"/>
</dbReference>
<dbReference type="AGR" id="MGI:2138939"/>
<dbReference type="CTD" id="55226"/>
<dbReference type="MGI" id="MGI:2138939">
    <property type="gene designation" value="Nat10"/>
</dbReference>
<dbReference type="VEuPathDB" id="HostDB:ENSMUSG00000027185"/>
<dbReference type="eggNOG" id="KOG2036">
    <property type="taxonomic scope" value="Eukaryota"/>
</dbReference>
<dbReference type="GeneTree" id="ENSGT00390000009140"/>
<dbReference type="HOGENOM" id="CLU_004652_0_0_1"/>
<dbReference type="InParanoid" id="Q8K224"/>
<dbReference type="OMA" id="HLHYIMS"/>
<dbReference type="OrthoDB" id="10067491at2759"/>
<dbReference type="PhylomeDB" id="Q8K224"/>
<dbReference type="TreeFam" id="TF300601"/>
<dbReference type="BioGRID-ORCS" id="98956">
    <property type="hits" value="28 hits in 83 CRISPR screens"/>
</dbReference>
<dbReference type="ChiTaRS" id="Nat10">
    <property type="organism name" value="mouse"/>
</dbReference>
<dbReference type="PRO" id="PR:Q8K224"/>
<dbReference type="Proteomes" id="UP000000589">
    <property type="component" value="Chromosome 2"/>
</dbReference>
<dbReference type="RNAct" id="Q8K224">
    <property type="molecule type" value="protein"/>
</dbReference>
<dbReference type="Bgee" id="ENSMUSG00000027185">
    <property type="expression patterns" value="Expressed in spermatocyte and 237 other cell types or tissues"/>
</dbReference>
<dbReference type="ExpressionAtlas" id="Q8K224">
    <property type="expression patterns" value="baseline and differential"/>
</dbReference>
<dbReference type="GO" id="GO:0030496">
    <property type="term" value="C:midbody"/>
    <property type="evidence" value="ECO:0007669"/>
    <property type="project" value="Ensembl"/>
</dbReference>
<dbReference type="GO" id="GO:0005730">
    <property type="term" value="C:nucleolus"/>
    <property type="evidence" value="ECO:0007669"/>
    <property type="project" value="UniProtKB-SubCell"/>
</dbReference>
<dbReference type="GO" id="GO:0032040">
    <property type="term" value="C:small-subunit processome"/>
    <property type="evidence" value="ECO:0000250"/>
    <property type="project" value="UniProtKB"/>
</dbReference>
<dbReference type="GO" id="GO:0005697">
    <property type="term" value="C:telomerase holoenzyme complex"/>
    <property type="evidence" value="ECO:0007669"/>
    <property type="project" value="Ensembl"/>
</dbReference>
<dbReference type="GO" id="GO:1990883">
    <property type="term" value="F:18S rRNA cytidine N-acetyltransferase activity"/>
    <property type="evidence" value="ECO:0007669"/>
    <property type="project" value="RHEA"/>
</dbReference>
<dbReference type="GO" id="GO:0005524">
    <property type="term" value="F:ATP binding"/>
    <property type="evidence" value="ECO:0007669"/>
    <property type="project" value="UniProtKB-UniRule"/>
</dbReference>
<dbReference type="GO" id="GO:0070182">
    <property type="term" value="F:DNA polymerase binding"/>
    <property type="evidence" value="ECO:0007669"/>
    <property type="project" value="Ensembl"/>
</dbReference>
<dbReference type="GO" id="GO:0106162">
    <property type="term" value="F:mRNA N-acetyltransferase activity"/>
    <property type="evidence" value="ECO:0000250"/>
    <property type="project" value="UniProtKB"/>
</dbReference>
<dbReference type="GO" id="GO:0051392">
    <property type="term" value="F:tRNA N4-acetyltransferase activity"/>
    <property type="evidence" value="ECO:0007669"/>
    <property type="project" value="RHEA"/>
</dbReference>
<dbReference type="GO" id="GO:0032211">
    <property type="term" value="P:negative regulation of telomere maintenance via telomerase"/>
    <property type="evidence" value="ECO:0007669"/>
    <property type="project" value="Ensembl"/>
</dbReference>
<dbReference type="GO" id="GO:0045727">
    <property type="term" value="P:positive regulation of translation"/>
    <property type="evidence" value="ECO:0000250"/>
    <property type="project" value="UniProtKB"/>
</dbReference>
<dbReference type="GO" id="GO:0006473">
    <property type="term" value="P:protein acetylation"/>
    <property type="evidence" value="ECO:0000250"/>
    <property type="project" value="UniProtKB"/>
</dbReference>
<dbReference type="GO" id="GO:0010824">
    <property type="term" value="P:regulation of centrosome duplication"/>
    <property type="evidence" value="ECO:0000250"/>
    <property type="project" value="UniProtKB"/>
</dbReference>
<dbReference type="GO" id="GO:0042274">
    <property type="term" value="P:ribosomal small subunit biogenesis"/>
    <property type="evidence" value="ECO:0000250"/>
    <property type="project" value="UniProtKB"/>
</dbReference>
<dbReference type="GO" id="GO:1904812">
    <property type="term" value="P:rRNA acetylation involved in maturation of SSU-rRNA"/>
    <property type="evidence" value="ECO:0007669"/>
    <property type="project" value="InterPro"/>
</dbReference>
<dbReference type="GO" id="GO:0051391">
    <property type="term" value="P:tRNA acetylation"/>
    <property type="evidence" value="ECO:0007669"/>
    <property type="project" value="UniProtKB-UniRule"/>
</dbReference>
<dbReference type="CDD" id="cd04301">
    <property type="entry name" value="NAT_SF"/>
    <property type="match status" value="1"/>
</dbReference>
<dbReference type="FunFam" id="3.40.50.11040:FF:000006">
    <property type="entry name" value="RNA cytidine acetyltransferase"/>
    <property type="match status" value="1"/>
</dbReference>
<dbReference type="FunFam" id="3.40.630.30:FF:000019">
    <property type="entry name" value="RNA cytidine acetyltransferase"/>
    <property type="match status" value="1"/>
</dbReference>
<dbReference type="FunFam" id="3.40.50.300:FF:002218">
    <property type="entry name" value="tRNA(Met) cytidine acetyltransferase TmcA"/>
    <property type="match status" value="1"/>
</dbReference>
<dbReference type="Gene3D" id="3.40.50.11040">
    <property type="match status" value="1"/>
</dbReference>
<dbReference type="Gene3D" id="3.40.630.30">
    <property type="match status" value="1"/>
</dbReference>
<dbReference type="Gene3D" id="3.40.50.300">
    <property type="entry name" value="P-loop containing nucleotide triphosphate hydrolases"/>
    <property type="match status" value="1"/>
</dbReference>
<dbReference type="HAMAP" id="MF_03211">
    <property type="entry name" value="RNA_acetyltr_Nat10"/>
    <property type="match status" value="1"/>
</dbReference>
<dbReference type="InterPro" id="IPR016181">
    <property type="entry name" value="Acyl_CoA_acyltransferase"/>
</dbReference>
<dbReference type="InterPro" id="IPR000182">
    <property type="entry name" value="GNAT_dom"/>
</dbReference>
<dbReference type="InterPro" id="IPR033688">
    <property type="entry name" value="NAT10"/>
</dbReference>
<dbReference type="InterPro" id="IPR007807">
    <property type="entry name" value="NAT10/TcmA_helicase"/>
</dbReference>
<dbReference type="InterPro" id="IPR027417">
    <property type="entry name" value="P-loop_NTPase"/>
</dbReference>
<dbReference type="InterPro" id="IPR032672">
    <property type="entry name" value="TmcA/NAT10/Kre33"/>
</dbReference>
<dbReference type="InterPro" id="IPR013562">
    <property type="entry name" value="TmcA_N"/>
</dbReference>
<dbReference type="InterPro" id="IPR027992">
    <property type="entry name" value="tRNA_bind_dom"/>
</dbReference>
<dbReference type="PANTHER" id="PTHR10925">
    <property type="entry name" value="N-ACETYLTRANSFERASE 10"/>
    <property type="match status" value="1"/>
</dbReference>
<dbReference type="PANTHER" id="PTHR10925:SF5">
    <property type="entry name" value="RNA CYTIDINE ACETYLTRANSFERASE"/>
    <property type="match status" value="1"/>
</dbReference>
<dbReference type="Pfam" id="PF13718">
    <property type="entry name" value="GNAT_acetyltr_2"/>
    <property type="match status" value="1"/>
</dbReference>
<dbReference type="Pfam" id="PF05127">
    <property type="entry name" value="NAT10_TcmA_helicase"/>
    <property type="match status" value="1"/>
</dbReference>
<dbReference type="Pfam" id="PF08351">
    <property type="entry name" value="TmcA_N"/>
    <property type="match status" value="1"/>
</dbReference>
<dbReference type="Pfam" id="PF13725">
    <property type="entry name" value="tRNA_bind_2"/>
    <property type="match status" value="1"/>
</dbReference>
<dbReference type="SUPFAM" id="SSF55729">
    <property type="entry name" value="Acyl-CoA N-acyltransferases (Nat)"/>
    <property type="match status" value="1"/>
</dbReference>
<dbReference type="PROSITE" id="PS51186">
    <property type="entry name" value="GNAT"/>
    <property type="match status" value="1"/>
</dbReference>
<organism>
    <name type="scientific">Mus musculus</name>
    <name type="common">Mouse</name>
    <dbReference type="NCBI Taxonomy" id="10090"/>
    <lineage>
        <taxon>Eukaryota</taxon>
        <taxon>Metazoa</taxon>
        <taxon>Chordata</taxon>
        <taxon>Craniata</taxon>
        <taxon>Vertebrata</taxon>
        <taxon>Euteleostomi</taxon>
        <taxon>Mammalia</taxon>
        <taxon>Eutheria</taxon>
        <taxon>Euarchontoglires</taxon>
        <taxon>Glires</taxon>
        <taxon>Rodentia</taxon>
        <taxon>Myomorpha</taxon>
        <taxon>Muroidea</taxon>
        <taxon>Muridae</taxon>
        <taxon>Murinae</taxon>
        <taxon>Mus</taxon>
        <taxon>Mus</taxon>
    </lineage>
</organism>
<proteinExistence type="evidence at protein level"/>
<keyword id="KW-0007">Acetylation</keyword>
<keyword id="KW-0012">Acyltransferase</keyword>
<keyword id="KW-0067">ATP-binding</keyword>
<keyword id="KW-0547">Nucleotide-binding</keyword>
<keyword id="KW-0539">Nucleus</keyword>
<keyword id="KW-0597">Phosphoprotein</keyword>
<keyword id="KW-1185">Reference proteome</keyword>
<keyword id="KW-0698">rRNA processing</keyword>
<keyword id="KW-0808">Transferase</keyword>
<keyword id="KW-0819">tRNA processing</keyword>
<reference key="1">
    <citation type="journal article" date="2009" name="PLoS Biol.">
        <title>Lineage-specific biology revealed by a finished genome assembly of the mouse.</title>
        <authorList>
            <person name="Church D.M."/>
            <person name="Goodstadt L."/>
            <person name="Hillier L.W."/>
            <person name="Zody M.C."/>
            <person name="Goldstein S."/>
            <person name="She X."/>
            <person name="Bult C.J."/>
            <person name="Agarwala R."/>
            <person name="Cherry J.L."/>
            <person name="DiCuccio M."/>
            <person name="Hlavina W."/>
            <person name="Kapustin Y."/>
            <person name="Meric P."/>
            <person name="Maglott D."/>
            <person name="Birtle Z."/>
            <person name="Marques A.C."/>
            <person name="Graves T."/>
            <person name="Zhou S."/>
            <person name="Teague B."/>
            <person name="Potamousis K."/>
            <person name="Churas C."/>
            <person name="Place M."/>
            <person name="Herschleb J."/>
            <person name="Runnheim R."/>
            <person name="Forrest D."/>
            <person name="Amos-Landgraf J."/>
            <person name="Schwartz D.C."/>
            <person name="Cheng Z."/>
            <person name="Lindblad-Toh K."/>
            <person name="Eichler E.E."/>
            <person name="Ponting C.P."/>
        </authorList>
    </citation>
    <scope>NUCLEOTIDE SEQUENCE [LARGE SCALE GENOMIC DNA]</scope>
    <source>
        <strain>C57BL/6J</strain>
    </source>
</reference>
<reference key="2">
    <citation type="journal article" date="2004" name="Genome Res.">
        <title>The status, quality, and expansion of the NIH full-length cDNA project: the Mammalian Gene Collection (MGC).</title>
        <authorList>
            <consortium name="The MGC Project Team"/>
        </authorList>
    </citation>
    <scope>NUCLEOTIDE SEQUENCE [LARGE SCALE MRNA]</scope>
    <source>
        <strain>FVB/N</strain>
        <strain>NMRI</strain>
        <tissue>Mammary tumor</tissue>
    </source>
</reference>
<reference key="3">
    <citation type="journal article" date="2005" name="Science">
        <title>The transcriptional landscape of the mammalian genome.</title>
        <authorList>
            <person name="Carninci P."/>
            <person name="Kasukawa T."/>
            <person name="Katayama S."/>
            <person name="Gough J."/>
            <person name="Frith M.C."/>
            <person name="Maeda N."/>
            <person name="Oyama R."/>
            <person name="Ravasi T."/>
            <person name="Lenhard B."/>
            <person name="Wells C."/>
            <person name="Kodzius R."/>
            <person name="Shimokawa K."/>
            <person name="Bajic V.B."/>
            <person name="Brenner S.E."/>
            <person name="Batalov S."/>
            <person name="Forrest A.R."/>
            <person name="Zavolan M."/>
            <person name="Davis M.J."/>
            <person name="Wilming L.G."/>
            <person name="Aidinis V."/>
            <person name="Allen J.E."/>
            <person name="Ambesi-Impiombato A."/>
            <person name="Apweiler R."/>
            <person name="Aturaliya R.N."/>
            <person name="Bailey T.L."/>
            <person name="Bansal M."/>
            <person name="Baxter L."/>
            <person name="Beisel K.W."/>
            <person name="Bersano T."/>
            <person name="Bono H."/>
            <person name="Chalk A.M."/>
            <person name="Chiu K.P."/>
            <person name="Choudhary V."/>
            <person name="Christoffels A."/>
            <person name="Clutterbuck D.R."/>
            <person name="Crowe M.L."/>
            <person name="Dalla E."/>
            <person name="Dalrymple B.P."/>
            <person name="de Bono B."/>
            <person name="Della Gatta G."/>
            <person name="di Bernardo D."/>
            <person name="Down T."/>
            <person name="Engstrom P."/>
            <person name="Fagiolini M."/>
            <person name="Faulkner G."/>
            <person name="Fletcher C.F."/>
            <person name="Fukushima T."/>
            <person name="Furuno M."/>
            <person name="Futaki S."/>
            <person name="Gariboldi M."/>
            <person name="Georgii-Hemming P."/>
            <person name="Gingeras T.R."/>
            <person name="Gojobori T."/>
            <person name="Green R.E."/>
            <person name="Gustincich S."/>
            <person name="Harbers M."/>
            <person name="Hayashi Y."/>
            <person name="Hensch T.K."/>
            <person name="Hirokawa N."/>
            <person name="Hill D."/>
            <person name="Huminiecki L."/>
            <person name="Iacono M."/>
            <person name="Ikeo K."/>
            <person name="Iwama A."/>
            <person name="Ishikawa T."/>
            <person name="Jakt M."/>
            <person name="Kanapin A."/>
            <person name="Katoh M."/>
            <person name="Kawasawa Y."/>
            <person name="Kelso J."/>
            <person name="Kitamura H."/>
            <person name="Kitano H."/>
            <person name="Kollias G."/>
            <person name="Krishnan S.P."/>
            <person name="Kruger A."/>
            <person name="Kummerfeld S.K."/>
            <person name="Kurochkin I.V."/>
            <person name="Lareau L.F."/>
            <person name="Lazarevic D."/>
            <person name="Lipovich L."/>
            <person name="Liu J."/>
            <person name="Liuni S."/>
            <person name="McWilliam S."/>
            <person name="Madan Babu M."/>
            <person name="Madera M."/>
            <person name="Marchionni L."/>
            <person name="Matsuda H."/>
            <person name="Matsuzawa S."/>
            <person name="Miki H."/>
            <person name="Mignone F."/>
            <person name="Miyake S."/>
            <person name="Morris K."/>
            <person name="Mottagui-Tabar S."/>
            <person name="Mulder N."/>
            <person name="Nakano N."/>
            <person name="Nakauchi H."/>
            <person name="Ng P."/>
            <person name="Nilsson R."/>
            <person name="Nishiguchi S."/>
            <person name="Nishikawa S."/>
            <person name="Nori F."/>
            <person name="Ohara O."/>
            <person name="Okazaki Y."/>
            <person name="Orlando V."/>
            <person name="Pang K.C."/>
            <person name="Pavan W.J."/>
            <person name="Pavesi G."/>
            <person name="Pesole G."/>
            <person name="Petrovsky N."/>
            <person name="Piazza S."/>
            <person name="Reed J."/>
            <person name="Reid J.F."/>
            <person name="Ring B.Z."/>
            <person name="Ringwald M."/>
            <person name="Rost B."/>
            <person name="Ruan Y."/>
            <person name="Salzberg S.L."/>
            <person name="Sandelin A."/>
            <person name="Schneider C."/>
            <person name="Schoenbach C."/>
            <person name="Sekiguchi K."/>
            <person name="Semple C.A."/>
            <person name="Seno S."/>
            <person name="Sessa L."/>
            <person name="Sheng Y."/>
            <person name="Shibata Y."/>
            <person name="Shimada H."/>
            <person name="Shimada K."/>
            <person name="Silva D."/>
            <person name="Sinclair B."/>
            <person name="Sperling S."/>
            <person name="Stupka E."/>
            <person name="Sugiura K."/>
            <person name="Sultana R."/>
            <person name="Takenaka Y."/>
            <person name="Taki K."/>
            <person name="Tammoja K."/>
            <person name="Tan S.L."/>
            <person name="Tang S."/>
            <person name="Taylor M.S."/>
            <person name="Tegner J."/>
            <person name="Teichmann S.A."/>
            <person name="Ueda H.R."/>
            <person name="van Nimwegen E."/>
            <person name="Verardo R."/>
            <person name="Wei C.L."/>
            <person name="Yagi K."/>
            <person name="Yamanishi H."/>
            <person name="Zabarovsky E."/>
            <person name="Zhu S."/>
            <person name="Zimmer A."/>
            <person name="Hide W."/>
            <person name="Bult C."/>
            <person name="Grimmond S.M."/>
            <person name="Teasdale R.D."/>
            <person name="Liu E.T."/>
            <person name="Brusic V."/>
            <person name="Quackenbush J."/>
            <person name="Wahlestedt C."/>
            <person name="Mattick J.S."/>
            <person name="Hume D.A."/>
            <person name="Kai C."/>
            <person name="Sasaki D."/>
            <person name="Tomaru Y."/>
            <person name="Fukuda S."/>
            <person name="Kanamori-Katayama M."/>
            <person name="Suzuki M."/>
            <person name="Aoki J."/>
            <person name="Arakawa T."/>
            <person name="Iida J."/>
            <person name="Imamura K."/>
            <person name="Itoh M."/>
            <person name="Kato T."/>
            <person name="Kawaji H."/>
            <person name="Kawagashira N."/>
            <person name="Kawashima T."/>
            <person name="Kojima M."/>
            <person name="Kondo S."/>
            <person name="Konno H."/>
            <person name="Nakano K."/>
            <person name="Ninomiya N."/>
            <person name="Nishio T."/>
            <person name="Okada M."/>
            <person name="Plessy C."/>
            <person name="Shibata K."/>
            <person name="Shiraki T."/>
            <person name="Suzuki S."/>
            <person name="Tagami M."/>
            <person name="Waki K."/>
            <person name="Watahiki A."/>
            <person name="Okamura-Oho Y."/>
            <person name="Suzuki H."/>
            <person name="Kawai J."/>
            <person name="Hayashizaki Y."/>
        </authorList>
    </citation>
    <scope>NUCLEOTIDE SEQUENCE [LARGE SCALE MRNA] OF 1-1005</scope>
    <source>
        <strain>C57BL/6J</strain>
        <tissue>Bone marrow</tissue>
        <tissue>Oviduct</tissue>
    </source>
</reference>
<reference key="4">
    <citation type="journal article" date="2003" name="DNA Res.">
        <title>Prediction of the coding sequences of mouse homologues of KIAA gene: III. The complete nucleotide sequences of 500 mouse KIAA-homologous cDNAs identified by screening of terminal sequences of cDNA clones randomly sampled from size-fractionated libraries.</title>
        <authorList>
            <person name="Okazaki N."/>
            <person name="Kikuno R."/>
            <person name="Ohara R."/>
            <person name="Inamoto S."/>
            <person name="Koseki H."/>
            <person name="Hiraoka S."/>
            <person name="Saga Y."/>
            <person name="Nagase T."/>
            <person name="Ohara O."/>
            <person name="Koga H."/>
        </authorList>
    </citation>
    <scope>NUCLEOTIDE SEQUENCE [LARGE SCALE MRNA] OF 610-1024</scope>
    <source>
        <tissue>Embryonic tail</tissue>
    </source>
</reference>
<reference key="5">
    <citation type="journal article" date="2010" name="Cell">
        <title>A tissue-specific atlas of mouse protein phosphorylation and expression.</title>
        <authorList>
            <person name="Huttlin E.L."/>
            <person name="Jedrychowski M.P."/>
            <person name="Elias J.E."/>
            <person name="Goswami T."/>
            <person name="Rad R."/>
            <person name="Beausoleil S.A."/>
            <person name="Villen J."/>
            <person name="Haas W."/>
            <person name="Sowa M.E."/>
            <person name="Gygi S.P."/>
        </authorList>
    </citation>
    <scope>IDENTIFICATION BY MASS SPECTROMETRY [LARGE SCALE ANALYSIS]</scope>
    <source>
        <tissue>Liver</tissue>
        <tissue>Pancreas</tissue>
        <tissue>Spleen</tissue>
        <tissue>Testis</tissue>
    </source>
</reference>
<reference key="6">
    <citation type="journal article" date="2018" name="Nat. Commun.">
        <title>Targeting of NAT10 enhances healthspan in a mouse model of human accelerated aging syndrome.</title>
        <authorList>
            <consortium name="Sanger Mouse Genetics Project"/>
            <person name="Balmus G."/>
            <person name="Larrieu D."/>
            <person name="Barros A.C."/>
            <person name="Collins C."/>
            <person name="Abrudan M."/>
            <person name="Demir M."/>
            <person name="Geisler N.J."/>
            <person name="Lelliott C.J."/>
            <person name="White J.K."/>
            <person name="Karp N.A."/>
            <person name="Atkinson J."/>
            <person name="Kirton A."/>
            <person name="Jacobsen M."/>
            <person name="Clift D."/>
            <person name="Rodriguez R."/>
            <person name="Adams D.J."/>
            <person name="Jackson S.P."/>
        </authorList>
    </citation>
    <scope>DISRUPTION PHENOTYPE</scope>
</reference>
<feature type="chain" id="PRO_0000327480" description="RNA cytidine acetyltransferase">
    <location>
        <begin position="1"/>
        <end position="1024"/>
    </location>
</feature>
<feature type="domain" description="N-acetyltransferase" evidence="3">
    <location>
        <begin position="558"/>
        <end position="753"/>
    </location>
</feature>
<feature type="region of interest" description="Required for localization to the nucleolus and midbody" evidence="2">
    <location>
        <begin position="702"/>
        <end position="1024"/>
    </location>
</feature>
<feature type="region of interest" description="Disordered" evidence="4">
    <location>
        <begin position="990"/>
        <end position="1024"/>
    </location>
</feature>
<feature type="compositionally biased region" description="Basic residues" evidence="4">
    <location>
        <begin position="1005"/>
        <end position="1024"/>
    </location>
</feature>
<feature type="binding site" evidence="3">
    <location>
        <begin position="287"/>
        <end position="296"/>
    </location>
    <ligand>
        <name>ATP</name>
        <dbReference type="ChEBI" id="CHEBI:30616"/>
    </ligand>
</feature>
<feature type="binding site" evidence="3">
    <location>
        <position position="470"/>
    </location>
    <ligand>
        <name>ATP</name>
        <dbReference type="ChEBI" id="CHEBI:30616"/>
    </ligand>
</feature>
<feature type="binding site" evidence="3">
    <location>
        <begin position="629"/>
        <end position="631"/>
    </location>
    <ligand>
        <name>acetyl-CoA</name>
        <dbReference type="ChEBI" id="CHEBI:57288"/>
    </ligand>
</feature>
<feature type="binding site" evidence="3">
    <location>
        <begin position="636"/>
        <end position="642"/>
    </location>
    <ligand>
        <name>acetyl-CoA</name>
        <dbReference type="ChEBI" id="CHEBI:57288"/>
    </ligand>
</feature>
<feature type="binding site" evidence="3">
    <location>
        <position position="725"/>
    </location>
    <ligand>
        <name>acetyl-CoA</name>
        <dbReference type="ChEBI" id="CHEBI:57288"/>
    </ligand>
</feature>
<feature type="modified residue" description="N6-acetyllysine" evidence="2">
    <location>
        <position position="426"/>
    </location>
</feature>
<feature type="modified residue" description="Phosphothreonine" evidence="2">
    <location>
        <position position="716"/>
    </location>
</feature>
<feature type="modified residue" description="Phosphoserine" evidence="2">
    <location>
        <position position="934"/>
    </location>
</feature>
<feature type="modified residue" description="Phosphoserine" evidence="2">
    <location>
        <position position="984"/>
    </location>
</feature>
<feature type="modified residue" description="Phosphoserine" evidence="2">
    <location>
        <position position="987"/>
    </location>
</feature>
<feature type="sequence conflict" description="In Ref. 3; BAC35626." evidence="6" ref="3">
    <original>QLQKKIK</original>
    <variation>FSHNKIM</variation>
    <location>
        <begin position="75"/>
        <end position="81"/>
    </location>
</feature>
<feature type="sequence conflict" description="In Ref. 3; BAC35626." evidence="6" ref="3">
    <original>N</original>
    <variation>Y</variation>
    <location>
        <position position="86"/>
    </location>
</feature>
<feature type="sequence conflict" description="In Ref. 3; BAE29107." evidence="6" ref="3">
    <original>P</original>
    <variation>S</variation>
    <location>
        <position position="208"/>
    </location>
</feature>
<feature type="sequence conflict" description="In Ref. 3; BAE29107." evidence="6" ref="3">
    <original>D</original>
    <variation>G</variation>
    <location>
        <position position="840"/>
    </location>
</feature>
<feature type="sequence conflict" description="In Ref. 4; BAC98237." evidence="6" ref="4">
    <original>ALLLGIGLQHKSVDQLEKEIELPSGQLMGLFNRIIRKVVK</original>
    <variation>VGHLGLHGGQGRTVELL</variation>
    <location>
        <begin position="865"/>
        <end position="904"/>
    </location>
</feature>
<accession>Q8K224</accession>
<accession>Q3UE04</accession>
<accession>Q6ZPJ7</accession>
<accession>Q80VD3</accession>
<accession>Q8BW78</accession>